<comment type="function">
    <text>Tachykinins are active peptides which excite neurons, evoke behavioral responses, are potent vasodilators and secretagogues, and contract (directly or indirectly) many smooth muscles.</text>
</comment>
<comment type="subcellular location">
    <subcellularLocation>
        <location>Secreted</location>
    </subcellularLocation>
</comment>
<comment type="similarity">
    <text evidence="2">Belongs to the tachykinin family.</text>
</comment>
<organism>
    <name type="scientific">Pelophylax ridibundus</name>
    <name type="common">Marsh frog</name>
    <name type="synonym">Rana ridibunda</name>
    <dbReference type="NCBI Taxonomy" id="8406"/>
    <lineage>
        <taxon>Eukaryota</taxon>
        <taxon>Metazoa</taxon>
        <taxon>Chordata</taxon>
        <taxon>Craniata</taxon>
        <taxon>Vertebrata</taxon>
        <taxon>Euteleostomi</taxon>
        <taxon>Amphibia</taxon>
        <taxon>Batrachia</taxon>
        <taxon>Anura</taxon>
        <taxon>Neobatrachia</taxon>
        <taxon>Ranoidea</taxon>
        <taxon>Ranidae</taxon>
        <taxon>Pelophylax</taxon>
    </lineage>
</organism>
<feature type="peptide" id="PRO_0000044418" description="Neurokinin-A">
    <location>
        <begin position="1"/>
        <end position="10"/>
    </location>
</feature>
<feature type="modified residue" description="Methionine amide" evidence="1">
    <location>
        <position position="10"/>
    </location>
</feature>
<evidence type="ECO:0000269" key="1">
    <source>
    </source>
</evidence>
<evidence type="ECO:0000305" key="2"/>
<dbReference type="PIR" id="S27178">
    <property type="entry name" value="S27178"/>
</dbReference>
<dbReference type="GO" id="GO:0005576">
    <property type="term" value="C:extracellular region"/>
    <property type="evidence" value="ECO:0007669"/>
    <property type="project" value="UniProtKB-SubCell"/>
</dbReference>
<dbReference type="GO" id="GO:0007218">
    <property type="term" value="P:neuropeptide signaling pathway"/>
    <property type="evidence" value="ECO:0007669"/>
    <property type="project" value="UniProtKB-KW"/>
</dbReference>
<dbReference type="InterPro" id="IPR013055">
    <property type="entry name" value="Tachy_Neuro_lke_CS"/>
</dbReference>
<dbReference type="PROSITE" id="PS00267">
    <property type="entry name" value="TACHYKININ"/>
    <property type="match status" value="1"/>
</dbReference>
<sequence length="10" mass="1160">HKLDSFIGLM</sequence>
<reference key="1">
    <citation type="journal article" date="1992" name="Biochem. J.">
        <title>Primary structure and receptor-binding properties of a neurokinin A-related peptide from frog gut.</title>
        <authorList>
            <person name="Wang Y."/>
            <person name="Badgery-Parker T."/>
            <person name="Lovas S."/>
            <person name="Chartrel N."/>
            <person name="Vaudry H."/>
            <person name="Burcher E."/>
            <person name="Conlon J.M."/>
        </authorList>
    </citation>
    <scope>PROTEIN SEQUENCE</scope>
    <scope>AMIDATION AT MET-10</scope>
    <source>
        <tissue>Intestine</tissue>
    </source>
</reference>
<protein>
    <recommendedName>
        <fullName>Neurokinin-A</fullName>
    </recommendedName>
</protein>
<name>TKNB_PELRI</name>
<proteinExistence type="evidence at protein level"/>
<keyword id="KW-0027">Amidation</keyword>
<keyword id="KW-0903">Direct protein sequencing</keyword>
<keyword id="KW-0527">Neuropeptide</keyword>
<keyword id="KW-0964">Secreted</keyword>
<accession>P29135</accession>